<feature type="peptide" id="PRO_0000043416" description="Chrysophsin-3">
    <location>
        <begin position="1"/>
        <end position="20"/>
    </location>
</feature>
<feature type="modified residue" description="Histidine amide" evidence="1">
    <location>
        <position position="20"/>
    </location>
</feature>
<sequence length="20" mass="2287">FIGLLISAGKAIHDLIRRRH</sequence>
<reference evidence="3" key="1">
    <citation type="journal article" date="2003" name="Eur. J. Biochem.">
        <title>Purification and characterization of three isoforms of chrysophsin, a novel antimicrobial peptide in the gills of the red sea bream, Chrysophrys major.</title>
        <authorList>
            <person name="Iijima N."/>
            <person name="Tanimoto N."/>
            <person name="Emoto Y."/>
            <person name="Morita Y."/>
            <person name="Uematsu K."/>
            <person name="Murakami T."/>
            <person name="Nakai T."/>
        </authorList>
    </citation>
    <scope>PROTEIN SEQUENCE</scope>
    <scope>FUNCTION</scope>
    <scope>AMIDATION AT HIS-20</scope>
    <scope>MASS SPECTROMETRY</scope>
    <scope>CIRCULAR DICHROISM ANALYSIS</scope>
    <scope>SYNTHESIS</scope>
    <source>
        <tissue>Gill</tissue>
    </source>
</reference>
<name>CHY3_PAGMA</name>
<evidence type="ECO:0000269" key="1">
    <source>
    </source>
</evidence>
<evidence type="ECO:0000303" key="2">
    <source>
    </source>
</evidence>
<evidence type="ECO:0000305" key="3"/>
<keyword id="KW-0027">Amidation</keyword>
<keyword id="KW-0044">Antibiotic</keyword>
<keyword id="KW-0929">Antimicrobial</keyword>
<keyword id="KW-0204">Cytolysis</keyword>
<keyword id="KW-0903">Direct protein sequencing</keyword>
<keyword id="KW-0354">Hemolysis</keyword>
<keyword id="KW-0964">Secreted</keyword>
<dbReference type="TCDB" id="1.C.88.1.3">
    <property type="family name" value="the chrysophsin (chrysophsin) family"/>
</dbReference>
<dbReference type="GO" id="GO:0005576">
    <property type="term" value="C:extracellular region"/>
    <property type="evidence" value="ECO:0007669"/>
    <property type="project" value="UniProtKB-SubCell"/>
</dbReference>
<dbReference type="GO" id="GO:0006952">
    <property type="term" value="P:defense response"/>
    <property type="evidence" value="ECO:0000314"/>
    <property type="project" value="UniProtKB"/>
</dbReference>
<dbReference type="GO" id="GO:0050829">
    <property type="term" value="P:defense response to Gram-negative bacterium"/>
    <property type="evidence" value="ECO:0000314"/>
    <property type="project" value="UniProtKB"/>
</dbReference>
<dbReference type="GO" id="GO:0050830">
    <property type="term" value="P:defense response to Gram-positive bacterium"/>
    <property type="evidence" value="ECO:0000314"/>
    <property type="project" value="UniProtKB"/>
</dbReference>
<dbReference type="GO" id="GO:0044179">
    <property type="term" value="P:hemolysis in another organism"/>
    <property type="evidence" value="ECO:0000314"/>
    <property type="project" value="UniProtKB"/>
</dbReference>
<organism evidence="3">
    <name type="scientific">Pagrus major</name>
    <name type="common">Red sea bream</name>
    <name type="synonym">Chrysophrys major</name>
    <dbReference type="NCBI Taxonomy" id="143350"/>
    <lineage>
        <taxon>Eukaryota</taxon>
        <taxon>Metazoa</taxon>
        <taxon>Chordata</taxon>
        <taxon>Craniata</taxon>
        <taxon>Vertebrata</taxon>
        <taxon>Euteleostomi</taxon>
        <taxon>Actinopterygii</taxon>
        <taxon>Neopterygii</taxon>
        <taxon>Teleostei</taxon>
        <taxon>Neoteleostei</taxon>
        <taxon>Acanthomorphata</taxon>
        <taxon>Eupercaria</taxon>
        <taxon>Spariformes</taxon>
        <taxon>Sparidae</taxon>
        <taxon>Pagrus</taxon>
    </lineage>
</organism>
<protein>
    <recommendedName>
        <fullName>Chrysophsin-3</fullName>
    </recommendedName>
</protein>
<proteinExistence type="evidence at protein level"/>
<comment type="function">
    <text evidence="1 2">Has antibacterial activity against Gram-positive bacteria B.subtilis ATCC 6633, L.garvieae ATCC 49156 and S.iniae F-8502, and Gram-negative bacteria E.coli WT-2, V.anguillarum ATCC 19264, V.penaeicida KHA, V.harveyi ATCC 14126, V.vulnificus ATCC 33148, A.salmonicida NCMB 1102 and P.putida ATCC 12633. Has hemolytic activity against human red blood cells. Seems to disrupt the membranes by adopting an alpha helical conformation. May play a significant role in innate host defense.</text>
</comment>
<comment type="subcellular location">
    <subcellularLocation>
        <location>Secreted</location>
    </subcellularLocation>
</comment>
<comment type="tissue specificity">
    <text>Gill.</text>
</comment>
<comment type="mass spectrometry" mass="2285.7" error="0.2" method="Electrospray" evidence="1"/>
<comment type="similarity">
    <text evidence="3">Belongs to the pleurocidin family.</text>
</comment>
<accession>P83547</accession>